<protein>
    <recommendedName>
        <fullName evidence="1">Large ribosomal subunit protein bL36</fullName>
    </recommendedName>
    <alternativeName>
        <fullName evidence="2">50S ribosomal protein L36</fullName>
    </alternativeName>
</protein>
<reference key="1">
    <citation type="journal article" date="2008" name="J. Bacteriol.">
        <title>The genome of Heliobacterium modesticaldum, a phototrophic representative of the Firmicutes containing the simplest photosynthetic apparatus.</title>
        <authorList>
            <person name="Sattley W.M."/>
            <person name="Madigan M.T."/>
            <person name="Swingley W.D."/>
            <person name="Cheung P.C."/>
            <person name="Clocksin K.M."/>
            <person name="Conrad A.L."/>
            <person name="Dejesa L.C."/>
            <person name="Honchak B.M."/>
            <person name="Jung D.O."/>
            <person name="Karbach L.E."/>
            <person name="Kurdoglu A."/>
            <person name="Lahiri S."/>
            <person name="Mastrian S.D."/>
            <person name="Page L.E."/>
            <person name="Taylor H.L."/>
            <person name="Wang Z.T."/>
            <person name="Raymond J."/>
            <person name="Chen M."/>
            <person name="Blankenship R.E."/>
            <person name="Touchman J.W."/>
        </authorList>
    </citation>
    <scope>NUCLEOTIDE SEQUENCE [LARGE SCALE GENOMIC DNA]</scope>
    <source>
        <strain>ATCC 51547 / Ice1</strain>
    </source>
</reference>
<dbReference type="EMBL" id="CP000930">
    <property type="protein sequence ID" value="ABZ83980.1"/>
    <property type="molecule type" value="Genomic_DNA"/>
</dbReference>
<dbReference type="RefSeq" id="WP_012282496.1">
    <property type="nucleotide sequence ID" value="NC_010337.2"/>
</dbReference>
<dbReference type="SMR" id="B0TC81"/>
<dbReference type="STRING" id="498761.HM1_1403"/>
<dbReference type="KEGG" id="hmo:HM1_1403"/>
<dbReference type="eggNOG" id="COG0257">
    <property type="taxonomic scope" value="Bacteria"/>
</dbReference>
<dbReference type="HOGENOM" id="CLU_135723_6_2_9"/>
<dbReference type="OrthoDB" id="9802520at2"/>
<dbReference type="Proteomes" id="UP000008550">
    <property type="component" value="Chromosome"/>
</dbReference>
<dbReference type="GO" id="GO:0005737">
    <property type="term" value="C:cytoplasm"/>
    <property type="evidence" value="ECO:0007669"/>
    <property type="project" value="UniProtKB-ARBA"/>
</dbReference>
<dbReference type="GO" id="GO:1990904">
    <property type="term" value="C:ribonucleoprotein complex"/>
    <property type="evidence" value="ECO:0007669"/>
    <property type="project" value="UniProtKB-KW"/>
</dbReference>
<dbReference type="GO" id="GO:0005840">
    <property type="term" value="C:ribosome"/>
    <property type="evidence" value="ECO:0007669"/>
    <property type="project" value="UniProtKB-KW"/>
</dbReference>
<dbReference type="GO" id="GO:0003735">
    <property type="term" value="F:structural constituent of ribosome"/>
    <property type="evidence" value="ECO:0007669"/>
    <property type="project" value="InterPro"/>
</dbReference>
<dbReference type="GO" id="GO:0006412">
    <property type="term" value="P:translation"/>
    <property type="evidence" value="ECO:0007669"/>
    <property type="project" value="UniProtKB-UniRule"/>
</dbReference>
<dbReference type="HAMAP" id="MF_00251">
    <property type="entry name" value="Ribosomal_bL36"/>
    <property type="match status" value="1"/>
</dbReference>
<dbReference type="InterPro" id="IPR000473">
    <property type="entry name" value="Ribosomal_bL36"/>
</dbReference>
<dbReference type="InterPro" id="IPR035977">
    <property type="entry name" value="Ribosomal_bL36_sp"/>
</dbReference>
<dbReference type="NCBIfam" id="TIGR01022">
    <property type="entry name" value="rpmJ_bact"/>
    <property type="match status" value="1"/>
</dbReference>
<dbReference type="PANTHER" id="PTHR42888">
    <property type="entry name" value="50S RIBOSOMAL PROTEIN L36, CHLOROPLASTIC"/>
    <property type="match status" value="1"/>
</dbReference>
<dbReference type="PANTHER" id="PTHR42888:SF1">
    <property type="entry name" value="LARGE RIBOSOMAL SUBUNIT PROTEIN BL36C"/>
    <property type="match status" value="1"/>
</dbReference>
<dbReference type="Pfam" id="PF00444">
    <property type="entry name" value="Ribosomal_L36"/>
    <property type="match status" value="1"/>
</dbReference>
<dbReference type="SUPFAM" id="SSF57840">
    <property type="entry name" value="Ribosomal protein L36"/>
    <property type="match status" value="1"/>
</dbReference>
<dbReference type="PROSITE" id="PS00828">
    <property type="entry name" value="RIBOSOMAL_L36"/>
    <property type="match status" value="1"/>
</dbReference>
<comment type="similarity">
    <text evidence="1">Belongs to the bacterial ribosomal protein bL36 family.</text>
</comment>
<evidence type="ECO:0000255" key="1">
    <source>
        <dbReference type="HAMAP-Rule" id="MF_00251"/>
    </source>
</evidence>
<evidence type="ECO:0000305" key="2"/>
<accession>B0TC81</accession>
<gene>
    <name evidence="1" type="primary">rpmJ</name>
    <name type="ordered locus">Helmi_13550</name>
    <name type="ORF">HM1_1403</name>
</gene>
<keyword id="KW-1185">Reference proteome</keyword>
<keyword id="KW-0687">Ribonucleoprotein</keyword>
<keyword id="KW-0689">Ribosomal protein</keyword>
<proteinExistence type="inferred from homology"/>
<sequence>MKVRPSVKTICDKCKIIKRKGKVMVICENPKHKQKQG</sequence>
<feature type="chain" id="PRO_1000101031" description="Large ribosomal subunit protein bL36">
    <location>
        <begin position="1"/>
        <end position="37"/>
    </location>
</feature>
<organism>
    <name type="scientific">Heliobacterium modesticaldum (strain ATCC 51547 / Ice1)</name>
    <dbReference type="NCBI Taxonomy" id="498761"/>
    <lineage>
        <taxon>Bacteria</taxon>
        <taxon>Bacillati</taxon>
        <taxon>Bacillota</taxon>
        <taxon>Clostridia</taxon>
        <taxon>Eubacteriales</taxon>
        <taxon>Heliobacteriaceae</taxon>
        <taxon>Heliomicrobium</taxon>
    </lineage>
</organism>
<name>RL36_HELMI</name>